<reference key="1">
    <citation type="journal article" date="2009" name="Proc. Natl. Acad. Sci. U.S.A.">
        <title>Eukaryote-to-eukaryote gene transfer events revealed by the genome sequence of the wine yeast Saccharomyces cerevisiae EC1118.</title>
        <authorList>
            <person name="Novo M."/>
            <person name="Bigey F."/>
            <person name="Beyne E."/>
            <person name="Galeote V."/>
            <person name="Gavory F."/>
            <person name="Mallet S."/>
            <person name="Cambon B."/>
            <person name="Legras J.-L."/>
            <person name="Wincker P."/>
            <person name="Casaregola S."/>
            <person name="Dequin S."/>
        </authorList>
    </citation>
    <scope>NUCLEOTIDE SEQUENCE [LARGE SCALE GENOMIC DNA]</scope>
    <source>
        <strain>Lalvin EC1118 / Prise de mousse</strain>
    </source>
</reference>
<feature type="chain" id="PRO_0000410664" description="Biogenesis of lysosome-related organelles complex 1 subunit SNN1">
    <location>
        <begin position="1"/>
        <end position="102"/>
    </location>
</feature>
<feature type="coiled-coil region" evidence="2">
    <location>
        <begin position="71"/>
        <end position="102"/>
    </location>
</feature>
<proteinExistence type="inferred from homology"/>
<gene>
    <name type="primary">SNN1</name>
    <name type="ORF">EC1118_1N9_2806g</name>
</gene>
<organism>
    <name type="scientific">Saccharomyces cerevisiae (strain Lalvin EC1118 / Prise de mousse)</name>
    <name type="common">Baker's yeast</name>
    <dbReference type="NCBI Taxonomy" id="643680"/>
    <lineage>
        <taxon>Eukaryota</taxon>
        <taxon>Fungi</taxon>
        <taxon>Dikarya</taxon>
        <taxon>Ascomycota</taxon>
        <taxon>Saccharomycotina</taxon>
        <taxon>Saccharomycetes</taxon>
        <taxon>Saccharomycetales</taxon>
        <taxon>Saccharomycetaceae</taxon>
        <taxon>Saccharomyces</taxon>
    </lineage>
</organism>
<name>SNAPN_YEAS8</name>
<dbReference type="EMBL" id="FN393086">
    <property type="protein sequence ID" value="CAY82517.1"/>
    <property type="molecule type" value="Genomic_DNA"/>
</dbReference>
<dbReference type="SMR" id="C8ZGE4"/>
<dbReference type="HOGENOM" id="CLU_178727_0_0_1"/>
<dbReference type="OrthoDB" id="36931at4893"/>
<dbReference type="Proteomes" id="UP000000286">
    <property type="component" value="Chromosome XIV, Scaffold EC1118_1N9"/>
</dbReference>
<dbReference type="GO" id="GO:0005768">
    <property type="term" value="C:endosome"/>
    <property type="evidence" value="ECO:0007669"/>
    <property type="project" value="UniProtKB-SubCell"/>
</dbReference>
<evidence type="ECO:0000250" key="1"/>
<evidence type="ECO:0000255" key="2"/>
<evidence type="ECO:0000305" key="3"/>
<sequence>MAGDSISADGTGVHPVELSVYSVLSTDLDGLYQSINELRESQALLILMLRKVRDKLRREGQVLYDPEPFKPTMDKLADLSARVRILSQRYEELQGNARALNN</sequence>
<accession>C8ZGE4</accession>
<keyword id="KW-0175">Coiled coil</keyword>
<keyword id="KW-0967">Endosome</keyword>
<keyword id="KW-0813">Transport</keyword>
<protein>
    <recommendedName>
        <fullName>Biogenesis of lysosome-related organelles complex 1 subunit SNN1</fullName>
        <shortName>BLOC-1 subunit SNN1</shortName>
    </recommendedName>
    <alternativeName>
        <fullName>SNAPIN-like protein 1</fullName>
    </alternativeName>
</protein>
<comment type="function">
    <text evidence="1">Component of the biogenesis of lysosome-related organelles complex-1 (BLOC-1), a complex involved in endosomal cargo sorting.</text>
</comment>
<comment type="subunit">
    <text evidence="1">Component of the biogenesis of lysosome-related organelles complex-1 (BLOC-1) composed of at least BLI1, BLS1, CNL1, KXD1, SNN1 and VAB2.</text>
</comment>
<comment type="subcellular location">
    <subcellularLocation>
        <location evidence="1">Endosome</location>
    </subcellularLocation>
</comment>
<comment type="similarity">
    <text evidence="3">Belongs to the SNAPIN family.</text>
</comment>